<comment type="similarity">
    <text evidence="1">Belongs to the UPF0346 family.</text>
</comment>
<gene>
    <name type="ordered locus">SaurJH9_1481</name>
</gene>
<feature type="chain" id="PRO_1000087617" description="UPF0346 protein SaurJH9_1481">
    <location>
        <begin position="1"/>
        <end position="73"/>
    </location>
</feature>
<proteinExistence type="inferred from homology"/>
<reference key="1">
    <citation type="submission" date="2007-05" db="EMBL/GenBank/DDBJ databases">
        <title>Complete sequence of chromosome of Staphylococcus aureus subsp. aureus JH9.</title>
        <authorList>
            <consortium name="US DOE Joint Genome Institute"/>
            <person name="Copeland A."/>
            <person name="Lucas S."/>
            <person name="Lapidus A."/>
            <person name="Barry K."/>
            <person name="Detter J.C."/>
            <person name="Glavina del Rio T."/>
            <person name="Hammon N."/>
            <person name="Israni S."/>
            <person name="Pitluck S."/>
            <person name="Chain P."/>
            <person name="Malfatti S."/>
            <person name="Shin M."/>
            <person name="Vergez L."/>
            <person name="Schmutz J."/>
            <person name="Larimer F."/>
            <person name="Land M."/>
            <person name="Hauser L."/>
            <person name="Kyrpides N."/>
            <person name="Kim E."/>
            <person name="Tomasz A."/>
            <person name="Richardson P."/>
        </authorList>
    </citation>
    <scope>NUCLEOTIDE SEQUENCE [LARGE SCALE GENOMIC DNA]</scope>
    <source>
        <strain>JH9</strain>
    </source>
</reference>
<evidence type="ECO:0000255" key="1">
    <source>
        <dbReference type="HAMAP-Rule" id="MF_01538"/>
    </source>
</evidence>
<protein>
    <recommendedName>
        <fullName evidence="1">UPF0346 protein SaurJH9_1481</fullName>
    </recommendedName>
</protein>
<dbReference type="EMBL" id="CP000703">
    <property type="protein sequence ID" value="ABQ49275.1"/>
    <property type="molecule type" value="Genomic_DNA"/>
</dbReference>
<dbReference type="RefSeq" id="WP_000801007.1">
    <property type="nucleotide sequence ID" value="NC_009487.1"/>
</dbReference>
<dbReference type="SMR" id="A5ISV2"/>
<dbReference type="KEGG" id="saj:SaurJH9_1481"/>
<dbReference type="HOGENOM" id="CLU_177534_1_0_9"/>
<dbReference type="Gene3D" id="1.10.150.260">
    <property type="entry name" value="YozE SAM-like"/>
    <property type="match status" value="1"/>
</dbReference>
<dbReference type="HAMAP" id="MF_01538">
    <property type="entry name" value="UPF0346"/>
    <property type="match status" value="1"/>
</dbReference>
<dbReference type="InterPro" id="IPR010673">
    <property type="entry name" value="UPF0346"/>
</dbReference>
<dbReference type="InterPro" id="IPR023089">
    <property type="entry name" value="YozE_SAM-like"/>
</dbReference>
<dbReference type="InterPro" id="IPR036806">
    <property type="entry name" value="YozE_SAM-like_sf"/>
</dbReference>
<dbReference type="NCBIfam" id="NF010193">
    <property type="entry name" value="PRK13672.1"/>
    <property type="match status" value="1"/>
</dbReference>
<dbReference type="Pfam" id="PF06855">
    <property type="entry name" value="YozE_SAM_like"/>
    <property type="match status" value="1"/>
</dbReference>
<dbReference type="PIRSF" id="PIRSF037262">
    <property type="entry name" value="UCP037262"/>
    <property type="match status" value="1"/>
</dbReference>
<dbReference type="SUPFAM" id="SSF140652">
    <property type="entry name" value="YozE-like"/>
    <property type="match status" value="1"/>
</dbReference>
<sequence length="73" mass="8870">MKNYSFYQFVMTVRGRHDDKGRLAEEIFDDLAFPKHDDDFNILSDYIETHGDFTLPMSVFDDLYEEYTEWLKF</sequence>
<name>Y1481_STAA9</name>
<accession>A5ISV2</accession>
<organism>
    <name type="scientific">Staphylococcus aureus (strain JH9)</name>
    <dbReference type="NCBI Taxonomy" id="359786"/>
    <lineage>
        <taxon>Bacteria</taxon>
        <taxon>Bacillati</taxon>
        <taxon>Bacillota</taxon>
        <taxon>Bacilli</taxon>
        <taxon>Bacillales</taxon>
        <taxon>Staphylococcaceae</taxon>
        <taxon>Staphylococcus</taxon>
    </lineage>
</organism>